<dbReference type="EC" id="6.1.1.19" evidence="1"/>
<dbReference type="EMBL" id="CP000025">
    <property type="protein sequence ID" value="AAW35630.1"/>
    <property type="molecule type" value="Genomic_DNA"/>
</dbReference>
<dbReference type="RefSeq" id="WP_011049895.1">
    <property type="nucleotide sequence ID" value="NC_003912.7"/>
</dbReference>
<dbReference type="SMR" id="Q5HTT9"/>
<dbReference type="KEGG" id="cjr:CJE1309"/>
<dbReference type="HOGENOM" id="CLU_006406_0_1_7"/>
<dbReference type="GO" id="GO:0005737">
    <property type="term" value="C:cytoplasm"/>
    <property type="evidence" value="ECO:0007669"/>
    <property type="project" value="UniProtKB-SubCell"/>
</dbReference>
<dbReference type="GO" id="GO:0004814">
    <property type="term" value="F:arginine-tRNA ligase activity"/>
    <property type="evidence" value="ECO:0007669"/>
    <property type="project" value="UniProtKB-UniRule"/>
</dbReference>
<dbReference type="GO" id="GO:0005524">
    <property type="term" value="F:ATP binding"/>
    <property type="evidence" value="ECO:0007669"/>
    <property type="project" value="UniProtKB-UniRule"/>
</dbReference>
<dbReference type="GO" id="GO:0006420">
    <property type="term" value="P:arginyl-tRNA aminoacylation"/>
    <property type="evidence" value="ECO:0007669"/>
    <property type="project" value="UniProtKB-UniRule"/>
</dbReference>
<dbReference type="CDD" id="cd00671">
    <property type="entry name" value="ArgRS_core"/>
    <property type="match status" value="1"/>
</dbReference>
<dbReference type="FunFam" id="3.40.50.620:FF:000062">
    <property type="entry name" value="Arginine--tRNA ligase"/>
    <property type="match status" value="1"/>
</dbReference>
<dbReference type="Gene3D" id="3.30.1360.70">
    <property type="entry name" value="Arginyl tRNA synthetase N-terminal domain"/>
    <property type="match status" value="1"/>
</dbReference>
<dbReference type="Gene3D" id="3.40.50.620">
    <property type="entry name" value="HUPs"/>
    <property type="match status" value="1"/>
</dbReference>
<dbReference type="Gene3D" id="1.10.730.10">
    <property type="entry name" value="Isoleucyl-tRNA Synthetase, Domain 1"/>
    <property type="match status" value="1"/>
</dbReference>
<dbReference type="HAMAP" id="MF_00123">
    <property type="entry name" value="Arg_tRNA_synth"/>
    <property type="match status" value="1"/>
</dbReference>
<dbReference type="InterPro" id="IPR001412">
    <property type="entry name" value="aa-tRNA-synth_I_CS"/>
</dbReference>
<dbReference type="InterPro" id="IPR001278">
    <property type="entry name" value="Arg-tRNA-ligase"/>
</dbReference>
<dbReference type="InterPro" id="IPR005148">
    <property type="entry name" value="Arg-tRNA-synth_N"/>
</dbReference>
<dbReference type="InterPro" id="IPR036695">
    <property type="entry name" value="Arg-tRNA-synth_N_sf"/>
</dbReference>
<dbReference type="InterPro" id="IPR035684">
    <property type="entry name" value="ArgRS_core"/>
</dbReference>
<dbReference type="InterPro" id="IPR008909">
    <property type="entry name" value="DALR_anticod-bd"/>
</dbReference>
<dbReference type="InterPro" id="IPR014729">
    <property type="entry name" value="Rossmann-like_a/b/a_fold"/>
</dbReference>
<dbReference type="InterPro" id="IPR009080">
    <property type="entry name" value="tRNAsynth_Ia_anticodon-bd"/>
</dbReference>
<dbReference type="NCBIfam" id="TIGR00456">
    <property type="entry name" value="argS"/>
    <property type="match status" value="1"/>
</dbReference>
<dbReference type="PANTHER" id="PTHR11956:SF5">
    <property type="entry name" value="ARGININE--TRNA LIGASE, CYTOPLASMIC"/>
    <property type="match status" value="1"/>
</dbReference>
<dbReference type="PANTHER" id="PTHR11956">
    <property type="entry name" value="ARGINYL-TRNA SYNTHETASE"/>
    <property type="match status" value="1"/>
</dbReference>
<dbReference type="Pfam" id="PF03485">
    <property type="entry name" value="Arg_tRNA_synt_N"/>
    <property type="match status" value="1"/>
</dbReference>
<dbReference type="Pfam" id="PF05746">
    <property type="entry name" value="DALR_1"/>
    <property type="match status" value="1"/>
</dbReference>
<dbReference type="Pfam" id="PF00750">
    <property type="entry name" value="tRNA-synt_1d"/>
    <property type="match status" value="1"/>
</dbReference>
<dbReference type="PRINTS" id="PR01038">
    <property type="entry name" value="TRNASYNTHARG"/>
</dbReference>
<dbReference type="SMART" id="SM01016">
    <property type="entry name" value="Arg_tRNA_synt_N"/>
    <property type="match status" value="1"/>
</dbReference>
<dbReference type="SMART" id="SM00836">
    <property type="entry name" value="DALR_1"/>
    <property type="match status" value="1"/>
</dbReference>
<dbReference type="SUPFAM" id="SSF47323">
    <property type="entry name" value="Anticodon-binding domain of a subclass of class I aminoacyl-tRNA synthetases"/>
    <property type="match status" value="1"/>
</dbReference>
<dbReference type="SUPFAM" id="SSF55190">
    <property type="entry name" value="Arginyl-tRNA synthetase (ArgRS), N-terminal 'additional' domain"/>
    <property type="match status" value="1"/>
</dbReference>
<dbReference type="SUPFAM" id="SSF52374">
    <property type="entry name" value="Nucleotidylyl transferase"/>
    <property type="match status" value="1"/>
</dbReference>
<dbReference type="PROSITE" id="PS00178">
    <property type="entry name" value="AA_TRNA_LIGASE_I"/>
    <property type="match status" value="1"/>
</dbReference>
<keyword id="KW-0030">Aminoacyl-tRNA synthetase</keyword>
<keyword id="KW-0067">ATP-binding</keyword>
<keyword id="KW-0963">Cytoplasm</keyword>
<keyword id="KW-0436">Ligase</keyword>
<keyword id="KW-0547">Nucleotide-binding</keyword>
<keyword id="KW-0648">Protein biosynthesis</keyword>
<feature type="chain" id="PRO_0000242002" description="Arginine--tRNA ligase">
    <location>
        <begin position="1"/>
        <end position="530"/>
    </location>
</feature>
<feature type="short sequence motif" description="'HIGH' region">
    <location>
        <begin position="113"/>
        <end position="123"/>
    </location>
</feature>
<gene>
    <name evidence="1" type="primary">argS</name>
    <name type="ordered locus">CJE1309</name>
</gene>
<protein>
    <recommendedName>
        <fullName evidence="1">Arginine--tRNA ligase</fullName>
        <ecNumber evidence="1">6.1.1.19</ecNumber>
    </recommendedName>
    <alternativeName>
        <fullName evidence="1">Arginyl-tRNA synthetase</fullName>
        <shortName evidence="1">ArgRS</shortName>
    </alternativeName>
</protein>
<sequence length="530" mass="60160">MKSIIFNEIKKILECDFALENPKDKNLAHFATPLAFSLAKELKKSPMLIASDLASKFQNHDCFESVEAVNGYLNFRISKTFLNELANQALTNPNDFTKGEKKQESFLLEYVSANPTGPLHIGHARGAVFGDTLTRLARHLGYKFNTEYYVNDAGNQIYLLGLSILLSVKESILHENVEYPEQYYKGEYIADLAKEAFEKFGKEFFSQENIPSLADWAKDKMLVLIKQNLEQAKIKIDSYVSERSYYDALNATLESLKEHKGIYEQEGKIWLASSQKGDEKDRVIIREDGRGTYLAADIVYHKDKMSRGYGKCINIWGADHHGYIPRMKAAMEFLGFDSNNLEIILAQMVSLLKDGEPYKMSKRAGNFILMSDVVNEIGSDALRYIFLSKKCDTHLEFDISDLQKEDSSNPVYYINYAHARIHQVFAKAGKKIDDVMKADLQSLNQDGVNLLFEALNLKAVLNDAFEARALQKIPDYLKNLAANFHKFYNENKVVGSANENDLLKLFSLVALSIKTAFSLMGIEAKNKMEH</sequence>
<name>SYR_CAMJR</name>
<proteinExistence type="inferred from homology"/>
<organism>
    <name type="scientific">Campylobacter jejuni (strain RM1221)</name>
    <dbReference type="NCBI Taxonomy" id="195099"/>
    <lineage>
        <taxon>Bacteria</taxon>
        <taxon>Pseudomonadati</taxon>
        <taxon>Campylobacterota</taxon>
        <taxon>Epsilonproteobacteria</taxon>
        <taxon>Campylobacterales</taxon>
        <taxon>Campylobacteraceae</taxon>
        <taxon>Campylobacter</taxon>
    </lineage>
</organism>
<reference key="1">
    <citation type="journal article" date="2005" name="PLoS Biol.">
        <title>Major structural differences and novel potential virulence mechanisms from the genomes of multiple Campylobacter species.</title>
        <authorList>
            <person name="Fouts D.E."/>
            <person name="Mongodin E.F."/>
            <person name="Mandrell R.E."/>
            <person name="Miller W.G."/>
            <person name="Rasko D.A."/>
            <person name="Ravel J."/>
            <person name="Brinkac L.M."/>
            <person name="DeBoy R.T."/>
            <person name="Parker C.T."/>
            <person name="Daugherty S.C."/>
            <person name="Dodson R.J."/>
            <person name="Durkin A.S."/>
            <person name="Madupu R."/>
            <person name="Sullivan S.A."/>
            <person name="Shetty J.U."/>
            <person name="Ayodeji M.A."/>
            <person name="Shvartsbeyn A."/>
            <person name="Schatz M.C."/>
            <person name="Badger J.H."/>
            <person name="Fraser C.M."/>
            <person name="Nelson K.E."/>
        </authorList>
    </citation>
    <scope>NUCLEOTIDE SEQUENCE [LARGE SCALE GENOMIC DNA]</scope>
    <source>
        <strain>RM1221</strain>
    </source>
</reference>
<accession>Q5HTT9</accession>
<evidence type="ECO:0000255" key="1">
    <source>
        <dbReference type="HAMAP-Rule" id="MF_00123"/>
    </source>
</evidence>
<comment type="catalytic activity">
    <reaction evidence="1">
        <text>tRNA(Arg) + L-arginine + ATP = L-arginyl-tRNA(Arg) + AMP + diphosphate</text>
        <dbReference type="Rhea" id="RHEA:20301"/>
        <dbReference type="Rhea" id="RHEA-COMP:9658"/>
        <dbReference type="Rhea" id="RHEA-COMP:9673"/>
        <dbReference type="ChEBI" id="CHEBI:30616"/>
        <dbReference type="ChEBI" id="CHEBI:32682"/>
        <dbReference type="ChEBI" id="CHEBI:33019"/>
        <dbReference type="ChEBI" id="CHEBI:78442"/>
        <dbReference type="ChEBI" id="CHEBI:78513"/>
        <dbReference type="ChEBI" id="CHEBI:456215"/>
        <dbReference type="EC" id="6.1.1.19"/>
    </reaction>
</comment>
<comment type="subunit">
    <text evidence="1">Monomer.</text>
</comment>
<comment type="subcellular location">
    <subcellularLocation>
        <location evidence="1">Cytoplasm</location>
    </subcellularLocation>
</comment>
<comment type="similarity">
    <text evidence="1">Belongs to the class-I aminoacyl-tRNA synthetase family.</text>
</comment>